<comment type="function">
    <text evidence="7">Tooth-associated epithelia protein that probably plays a role in odontogenesis, the complex process that results in the initiation and generation of the tooth. May be incorporated in the enamel matrix at the end of mineralization process. Involved in the induction of RHOA activity via interaction with ARHGEF and expression of downstream factors such as ROCK. Plays a role in attachment of the junctional epithelium to the tooth surface.</text>
</comment>
<comment type="subunit">
    <text evidence="7">Interacts (via C-terminus) with ARHGEF5.</text>
</comment>
<comment type="interaction">
    <interactant intactId="EBI-5774125">
        <id>A1E959</id>
    </interactant>
    <interactant intactId="EBI-12137265">
        <id>Q13444-2</id>
        <label>ADAM15</label>
    </interactant>
    <organismsDiffer>false</organismsDiffer>
    <experiments>3</experiments>
</comment>
<comment type="interaction">
    <interactant intactId="EBI-5774125">
        <id>A1E959</id>
    </interactant>
    <interactant intactId="EBI-948603">
        <id>Q03989</id>
        <label>ARID5A</label>
    </interactant>
    <organismsDiffer>false</organismsDiffer>
    <experiments>3</experiments>
</comment>
<comment type="interaction">
    <interactant intactId="EBI-5774125">
        <id>A1E959</id>
    </interactant>
    <interactant intactId="EBI-701903">
        <id>Q14192</id>
        <label>FHL2</label>
    </interactant>
    <organismsDiffer>false</organismsDiffer>
    <experiments>2</experiments>
</comment>
<comment type="interaction">
    <interactant intactId="EBI-5774125">
        <id>A1E959</id>
    </interactant>
    <interactant intactId="EBI-740220">
        <id>O14964</id>
        <label>HGS</label>
    </interactant>
    <organismsDiffer>false</organismsDiffer>
    <experiments>3</experiments>
</comment>
<comment type="interaction">
    <interactant intactId="EBI-5774125">
        <id>A1E959</id>
    </interactant>
    <interactant intactId="EBI-394558">
        <id>Q71SY5</id>
        <label>MED25</label>
    </interactant>
    <organismsDiffer>false</organismsDiffer>
    <experiments>3</experiments>
</comment>
<comment type="interaction">
    <interactant intactId="EBI-5774125">
        <id>A1E959</id>
    </interactant>
    <interactant intactId="EBI-1389308">
        <id>Q7Z3K3</id>
        <label>POGZ</label>
    </interactant>
    <organismsDiffer>false</organismsDiffer>
    <experiments>3</experiments>
</comment>
<comment type="interaction">
    <interactant intactId="EBI-5774125">
        <id>A1E959</id>
    </interactant>
    <interactant intactId="EBI-727004">
        <id>O00560</id>
        <label>SDCBP</label>
    </interactant>
    <organismsDiffer>false</organismsDiffer>
    <experiments>3</experiments>
</comment>
<comment type="interaction">
    <interactant intactId="EBI-5774125">
        <id>A1E959</id>
    </interactant>
    <interactant intactId="EBI-766589">
        <id>P09234</id>
        <label>SNRPC</label>
    </interactant>
    <organismsDiffer>false</organismsDiffer>
    <experiments>3</experiments>
</comment>
<comment type="interaction">
    <interactant intactId="EBI-5774125">
        <id>A1E959</id>
    </interactant>
    <interactant intactId="EBI-1222614">
        <id>Q8IWB4</id>
        <label>SPATA31A7</label>
    </interactant>
    <organismsDiffer>false</organismsDiffer>
    <experiments>3</experiments>
</comment>
<comment type="interaction">
    <interactant intactId="EBI-5774125">
        <id>A1E959</id>
    </interactant>
    <interactant intactId="EBI-10191303">
        <id>O95231</id>
        <label>VENTX</label>
    </interactant>
    <organismsDiffer>false</organismsDiffer>
    <experiments>3</experiments>
</comment>
<comment type="subcellular location">
    <subcellularLocation>
        <location evidence="2">Secreted</location>
    </subcellularLocation>
    <subcellularLocation>
        <location evidence="7">Cytoplasm</location>
    </subcellularLocation>
    <subcellularLocation>
        <location evidence="7">Nucleus</location>
    </subcellularLocation>
</comment>
<comment type="tissue specificity">
    <text evidence="7">Expressed in the junctional epithelium of healthy teeth. In periodontitis, absent in the pocket epithelium of the diseased periodontium but is detected in the gingival crevicular fluid.</text>
</comment>
<comment type="PTM">
    <text evidence="1">O-glycosylated.</text>
</comment>
<comment type="miscellaneous">
    <text>ODAM protein is the unique constituent of calcifying epithelial odontogenic tumors (CEOTs), also known as Pindborg tumors. CEOTs are benign but locally aggressive pathologic entities arising mainly in the mandible and commonly associated with an unerupted or embedded tooth. They are characterized by the presence of squamous-cell proliferation, calcification, and, notably, amyloid deposits.</text>
</comment>
<comment type="similarity">
    <text evidence="8">Belongs to the ODAM family.</text>
</comment>
<comment type="sequence caution" evidence="8">
    <conflict type="erroneous initiation">
        <sequence resource="EMBL-CDS" id="BAA91226"/>
    </conflict>
</comment>
<protein>
    <recommendedName>
        <fullName>Odontogenic ameloblast-associated protein</fullName>
    </recommendedName>
    <alternativeName>
        <fullName>Apin</fullName>
    </alternativeName>
</protein>
<feature type="signal peptide" evidence="3">
    <location>
        <begin position="1"/>
        <end position="15"/>
    </location>
</feature>
<feature type="chain" id="PRO_5000183879" description="Odontogenic ameloblast-associated protein">
    <location>
        <begin position="16"/>
        <end position="279"/>
    </location>
</feature>
<feature type="region of interest" description="Interaction with ARHGEF5" evidence="7">
    <location>
        <begin position="127"/>
        <end position="129"/>
    </location>
</feature>
<feature type="region of interest" description="Disordered" evidence="4">
    <location>
        <begin position="243"/>
        <end position="279"/>
    </location>
</feature>
<feature type="compositionally biased region" description="Polar residues" evidence="4">
    <location>
        <begin position="243"/>
        <end position="263"/>
    </location>
</feature>
<feature type="compositionally biased region" description="Basic and acidic residues" evidence="4">
    <location>
        <begin position="267"/>
        <end position="279"/>
    </location>
</feature>
<feature type="glycosylation site" description="O-linked (GalNAc...) threonine" evidence="3">
    <location>
        <position position="115"/>
    </location>
</feature>
<feature type="glycosylation site" description="O-linked (GalNAc...) threonine" evidence="3">
    <location>
        <position position="119"/>
    </location>
</feature>
<feature type="glycosylation site" description="O-linked (GalNAc...) threonine" evidence="3">
    <location>
        <position position="244"/>
    </location>
</feature>
<feature type="glycosylation site" description="O-linked (GalNAc...) serine" evidence="3">
    <location>
        <position position="249"/>
    </location>
</feature>
<feature type="glycosylation site" description="O-linked (GalNAc...) threonine" evidence="3">
    <location>
        <position position="250"/>
    </location>
</feature>
<feature type="glycosylation site" description="O-linked (GalNAc...) threonine" evidence="3">
    <location>
        <position position="251"/>
    </location>
</feature>
<feature type="glycosylation site" description="O-linked (GalNAc...) threonine" evidence="3">
    <location>
        <position position="255"/>
    </location>
</feature>
<feature type="glycosylation site" description="O-linked (GalNAc...) serine" evidence="3">
    <location>
        <position position="256"/>
    </location>
</feature>
<feature type="glycosylation site" description="O-linked (GalNAc...) threonine" evidence="3">
    <location>
        <position position="261"/>
    </location>
</feature>
<feature type="glycosylation site" description="O-linked (GalNAc...) threonine" evidence="3">
    <location>
        <position position="263"/>
    </location>
</feature>
<feature type="glycosylation site" description="O-linked (GalNAc...) threonine" evidence="3">
    <location>
        <position position="273"/>
    </location>
</feature>
<feature type="glycosylation site" description="O-linked (GalNAc...) serine" evidence="3">
    <location>
        <position position="275"/>
    </location>
</feature>
<feature type="sequence variant" id="VAR_039812" description="In dbSNP:rs3196714." evidence="5">
    <original>I</original>
    <variation>T</variation>
    <location>
        <position position="222"/>
    </location>
</feature>
<feature type="sequence variant" id="VAR_039813" description="In a colorectal cancer sample; somatic mutation." evidence="6">
    <original>E</original>
    <variation>D</variation>
    <location>
        <position position="269"/>
    </location>
</feature>
<proteinExistence type="evidence at protein level"/>
<sequence>MKIIILLGFLGATLSAPLIPQRLMSASNSNELLLNLNNGQLLPLQLQGPLNSWIPPFSGILQQQQQAQIPGLSQFSLSALDQFAGLLPNQIPLTGEASFAQGAQAGQVDPLQLQTPPQTQPGPSHVMPYVFSFKMPQEQGQMFQYYPVYMVLPWEQPQQTVPRSPQQTRQQQYEEQIPFYAQFGYIPQLAEPAISGGQQQLAFDPQLGTAPEIAVMSTGEEIPYLQKEAINFRHDSAGVFMPSTSPKPSTTNVFTSAVDQTITPELPEEKDKTDSLREP</sequence>
<evidence type="ECO:0000250" key="1"/>
<evidence type="ECO:0000250" key="2">
    <source>
        <dbReference type="UniProtKB" id="Q3HS83"/>
    </source>
</evidence>
<evidence type="ECO:0000255" key="3"/>
<evidence type="ECO:0000256" key="4">
    <source>
        <dbReference type="SAM" id="MobiDB-lite"/>
    </source>
</evidence>
<evidence type="ECO:0000269" key="5">
    <source>
    </source>
</evidence>
<evidence type="ECO:0000269" key="6">
    <source>
    </source>
</evidence>
<evidence type="ECO:0000269" key="7">
    <source>
    </source>
</evidence>
<evidence type="ECO:0000305" key="8"/>
<organism>
    <name type="scientific">Homo sapiens</name>
    <name type="common">Human</name>
    <dbReference type="NCBI Taxonomy" id="9606"/>
    <lineage>
        <taxon>Eukaryota</taxon>
        <taxon>Metazoa</taxon>
        <taxon>Chordata</taxon>
        <taxon>Craniata</taxon>
        <taxon>Vertebrata</taxon>
        <taxon>Euteleostomi</taxon>
        <taxon>Mammalia</taxon>
        <taxon>Eutheria</taxon>
        <taxon>Euarchontoglires</taxon>
        <taxon>Primates</taxon>
        <taxon>Haplorrhini</taxon>
        <taxon>Catarrhini</taxon>
        <taxon>Hominidae</taxon>
        <taxon>Homo</taxon>
    </lineage>
</organism>
<reference key="1">
    <citation type="submission" date="2006-11" db="EMBL/GenBank/DDBJ databases">
        <authorList>
            <person name="Moffatt P."/>
            <person name="Smith C.E."/>
            <person name="Nanci A."/>
        </authorList>
    </citation>
    <scope>NUCLEOTIDE SEQUENCE [MRNA]</scope>
</reference>
<reference key="2">
    <citation type="submission" date="2005-07" db="EMBL/GenBank/DDBJ databases">
        <authorList>
            <person name="Mural R.J."/>
            <person name="Istrail S."/>
            <person name="Sutton G.G."/>
            <person name="Florea L."/>
            <person name="Halpern A.L."/>
            <person name="Mobarry C.M."/>
            <person name="Lippert R."/>
            <person name="Walenz B."/>
            <person name="Shatkay H."/>
            <person name="Dew I."/>
            <person name="Miller J.R."/>
            <person name="Flanigan M.J."/>
            <person name="Edwards N.J."/>
            <person name="Bolanos R."/>
            <person name="Fasulo D."/>
            <person name="Halldorsson B.V."/>
            <person name="Hannenhalli S."/>
            <person name="Turner R."/>
            <person name="Yooseph S."/>
            <person name="Lu F."/>
            <person name="Nusskern D.R."/>
            <person name="Shue B.C."/>
            <person name="Zheng X.H."/>
            <person name="Zhong F."/>
            <person name="Delcher A.L."/>
            <person name="Huson D.H."/>
            <person name="Kravitz S.A."/>
            <person name="Mouchard L."/>
            <person name="Reinert K."/>
            <person name="Remington K.A."/>
            <person name="Clark A.G."/>
            <person name="Waterman M.S."/>
            <person name="Eichler E.E."/>
            <person name="Adams M.D."/>
            <person name="Hunkapiller M.W."/>
            <person name="Myers E.W."/>
            <person name="Venter J.C."/>
        </authorList>
    </citation>
    <scope>NUCLEOTIDE SEQUENCE [LARGE SCALE GENOMIC DNA]</scope>
</reference>
<reference key="3">
    <citation type="journal article" date="2004" name="Nat. Genet.">
        <title>Complete sequencing and characterization of 21,243 full-length human cDNAs.</title>
        <authorList>
            <person name="Ota T."/>
            <person name="Suzuki Y."/>
            <person name="Nishikawa T."/>
            <person name="Otsuki T."/>
            <person name="Sugiyama T."/>
            <person name="Irie R."/>
            <person name="Wakamatsu A."/>
            <person name="Hayashi K."/>
            <person name="Sato H."/>
            <person name="Nagai K."/>
            <person name="Kimura K."/>
            <person name="Makita H."/>
            <person name="Sekine M."/>
            <person name="Obayashi M."/>
            <person name="Nishi T."/>
            <person name="Shibahara T."/>
            <person name="Tanaka T."/>
            <person name="Ishii S."/>
            <person name="Yamamoto J."/>
            <person name="Saito K."/>
            <person name="Kawai Y."/>
            <person name="Isono Y."/>
            <person name="Nakamura Y."/>
            <person name="Nagahari K."/>
            <person name="Murakami K."/>
            <person name="Yasuda T."/>
            <person name="Iwayanagi T."/>
            <person name="Wagatsuma M."/>
            <person name="Shiratori A."/>
            <person name="Sudo H."/>
            <person name="Hosoiri T."/>
            <person name="Kaku Y."/>
            <person name="Kodaira H."/>
            <person name="Kondo H."/>
            <person name="Sugawara M."/>
            <person name="Takahashi M."/>
            <person name="Kanda K."/>
            <person name="Yokoi T."/>
            <person name="Furuya T."/>
            <person name="Kikkawa E."/>
            <person name="Omura Y."/>
            <person name="Abe K."/>
            <person name="Kamihara K."/>
            <person name="Katsuta N."/>
            <person name="Sato K."/>
            <person name="Tanikawa M."/>
            <person name="Yamazaki M."/>
            <person name="Ninomiya K."/>
            <person name="Ishibashi T."/>
            <person name="Yamashita H."/>
            <person name="Murakawa K."/>
            <person name="Fujimori K."/>
            <person name="Tanai H."/>
            <person name="Kimata M."/>
            <person name="Watanabe M."/>
            <person name="Hiraoka S."/>
            <person name="Chiba Y."/>
            <person name="Ishida S."/>
            <person name="Ono Y."/>
            <person name="Takiguchi S."/>
            <person name="Watanabe S."/>
            <person name="Yosida M."/>
            <person name="Hotuta T."/>
            <person name="Kusano J."/>
            <person name="Kanehori K."/>
            <person name="Takahashi-Fujii A."/>
            <person name="Hara H."/>
            <person name="Tanase T.-O."/>
            <person name="Nomura Y."/>
            <person name="Togiya S."/>
            <person name="Komai F."/>
            <person name="Hara R."/>
            <person name="Takeuchi K."/>
            <person name="Arita M."/>
            <person name="Imose N."/>
            <person name="Musashino K."/>
            <person name="Yuuki H."/>
            <person name="Oshima A."/>
            <person name="Sasaki N."/>
            <person name="Aotsuka S."/>
            <person name="Yoshikawa Y."/>
            <person name="Matsunawa H."/>
            <person name="Ichihara T."/>
            <person name="Shiohata N."/>
            <person name="Sano S."/>
            <person name="Moriya S."/>
            <person name="Momiyama H."/>
            <person name="Satoh N."/>
            <person name="Takami S."/>
            <person name="Terashima Y."/>
            <person name="Suzuki O."/>
            <person name="Nakagawa S."/>
            <person name="Senoh A."/>
            <person name="Mizoguchi H."/>
            <person name="Goto Y."/>
            <person name="Shimizu F."/>
            <person name="Wakebe H."/>
            <person name="Hishigaki H."/>
            <person name="Watanabe T."/>
            <person name="Sugiyama A."/>
            <person name="Takemoto M."/>
            <person name="Kawakami B."/>
            <person name="Yamazaki M."/>
            <person name="Watanabe K."/>
            <person name="Kumagai A."/>
            <person name="Itakura S."/>
            <person name="Fukuzumi Y."/>
            <person name="Fujimori Y."/>
            <person name="Komiyama M."/>
            <person name="Tashiro H."/>
            <person name="Tanigami A."/>
            <person name="Fujiwara T."/>
            <person name="Ono T."/>
            <person name="Yamada K."/>
            <person name="Fujii Y."/>
            <person name="Ozaki K."/>
            <person name="Hirao M."/>
            <person name="Ohmori Y."/>
            <person name="Kawabata A."/>
            <person name="Hikiji T."/>
            <person name="Kobatake N."/>
            <person name="Inagaki H."/>
            <person name="Ikema Y."/>
            <person name="Okamoto S."/>
            <person name="Okitani R."/>
            <person name="Kawakami T."/>
            <person name="Noguchi S."/>
            <person name="Itoh T."/>
            <person name="Shigeta K."/>
            <person name="Senba T."/>
            <person name="Matsumura K."/>
            <person name="Nakajima Y."/>
            <person name="Mizuno T."/>
            <person name="Morinaga M."/>
            <person name="Sasaki M."/>
            <person name="Togashi T."/>
            <person name="Oyama M."/>
            <person name="Hata H."/>
            <person name="Watanabe M."/>
            <person name="Komatsu T."/>
            <person name="Mizushima-Sugano J."/>
            <person name="Satoh T."/>
            <person name="Shirai Y."/>
            <person name="Takahashi Y."/>
            <person name="Nakagawa K."/>
            <person name="Okumura K."/>
            <person name="Nagase T."/>
            <person name="Nomura N."/>
            <person name="Kikuchi H."/>
            <person name="Masuho Y."/>
            <person name="Yamashita R."/>
            <person name="Nakai K."/>
            <person name="Yada T."/>
            <person name="Nakamura Y."/>
            <person name="Ohara O."/>
            <person name="Isogai T."/>
            <person name="Sugano S."/>
        </authorList>
    </citation>
    <scope>NUCLEOTIDE SEQUENCE [LARGE SCALE MRNA] OF 112-279</scope>
    <scope>VARIANT THR-222</scope>
    <source>
        <tissue>Carcinoma</tissue>
    </source>
</reference>
<reference key="4">
    <citation type="journal article" date="2004" name="Genome Res.">
        <title>The status, quality, and expansion of the NIH full-length cDNA project: the Mammalian Gene Collection (MGC).</title>
        <authorList>
            <consortium name="The MGC Project Team"/>
        </authorList>
    </citation>
    <scope>NUCLEOTIDE SEQUENCE [LARGE SCALE MRNA] OF 127-279</scope>
    <source>
        <tissue>Lung</tissue>
    </source>
</reference>
<reference key="5">
    <citation type="journal article" date="2003" name="J. Lab. Clin. Med.">
        <title>Calcifying epithelial odontogenic (Pindborg) tumor-associated amyloid consists of a novel human protein.</title>
        <authorList>
            <person name="Solomon A."/>
            <person name="Murphy C.L."/>
            <person name="Weaver K."/>
            <person name="Weiss D.T."/>
            <person name="Hrncic R."/>
            <person name="Eulitz M."/>
            <person name="Donnell R.L."/>
            <person name="Sletten K."/>
            <person name="Westermark G."/>
            <person name="Westermark P."/>
        </authorList>
    </citation>
    <scope>IDENTIFICATION BY MASS SPECTROMETRY</scope>
    <scope>INVOLVEMENT IN CEOT</scope>
</reference>
<reference key="6">
    <citation type="journal article" date="2008" name="J. Cell. Biochem.">
        <title>Characterization of Apin, a secreted protein highly expressed in tooth-associated epithelia.</title>
        <authorList>
            <person name="Moffatt P."/>
            <person name="Smith C.E."/>
            <person name="St Arnaud R."/>
            <person name="Nanci A."/>
        </authorList>
    </citation>
    <scope>IDENTIFICATION</scope>
</reference>
<reference key="7">
    <citation type="journal article" date="2015" name="J. Biol. Chem.">
        <title>Odontogenic ameloblast-associated protein (ODAM) Mediates Junctional Epithelium Attachment to Tooth via Integrin-ODAM-Rho guanine nucleotide exchange factor 5 (ARHGEF5)-Ras homolog gene family member A (RhoA) Signaling.</title>
        <authorList>
            <person name="Lee H.K."/>
            <person name="Ji S."/>
            <person name="Park S.J."/>
            <person name="Choung H.W."/>
            <person name="Choi Y."/>
            <person name="Lee H.J."/>
            <person name="Park S.Y."/>
            <person name="Park J.C."/>
        </authorList>
    </citation>
    <scope>FUNCTION</scope>
    <scope>INTERACTION WITH ARHGEF5</scope>
    <scope>SUBCELLULAR LOCATION</scope>
    <scope>TISSUE SPECIFICITY</scope>
</reference>
<reference key="8">
    <citation type="journal article" date="2006" name="Science">
        <title>The consensus coding sequences of human breast and colorectal cancers.</title>
        <authorList>
            <person name="Sjoeblom T."/>
            <person name="Jones S."/>
            <person name="Wood L.D."/>
            <person name="Parsons D.W."/>
            <person name="Lin J."/>
            <person name="Barber T.D."/>
            <person name="Mandelker D."/>
            <person name="Leary R.J."/>
            <person name="Ptak J."/>
            <person name="Silliman N."/>
            <person name="Szabo S."/>
            <person name="Buckhaults P."/>
            <person name="Farrell C."/>
            <person name="Meeh P."/>
            <person name="Markowitz S.D."/>
            <person name="Willis J."/>
            <person name="Dawson D."/>
            <person name="Willson J.K.V."/>
            <person name="Gazdar A.F."/>
            <person name="Hartigan J."/>
            <person name="Wu L."/>
            <person name="Liu C."/>
            <person name="Parmigiani G."/>
            <person name="Park B.H."/>
            <person name="Bachman K.E."/>
            <person name="Papadopoulos N."/>
            <person name="Vogelstein B."/>
            <person name="Kinzler K.W."/>
            <person name="Velculescu V.E."/>
        </authorList>
    </citation>
    <scope>VARIANT [LARGE SCALE ANALYSIS] ASP-269</scope>
</reference>
<gene>
    <name type="primary">ODAM</name>
    <name type="synonym">APIN</name>
</gene>
<accession>A1E959</accession>
<accession>Q8WWE5</accession>
<accession>Q9NWZ9</accession>
<keyword id="KW-0091">Biomineralization</keyword>
<keyword id="KW-0963">Cytoplasm</keyword>
<keyword id="KW-0325">Glycoprotein</keyword>
<keyword id="KW-0539">Nucleus</keyword>
<keyword id="KW-1267">Proteomics identification</keyword>
<keyword id="KW-1185">Reference proteome</keyword>
<keyword id="KW-0964">Secreted</keyword>
<keyword id="KW-0732">Signal</keyword>
<dbReference type="EMBL" id="EF113908">
    <property type="protein sequence ID" value="ABL11577.1"/>
    <property type="molecule type" value="mRNA"/>
</dbReference>
<dbReference type="EMBL" id="CH471057">
    <property type="protein sequence ID" value="EAX05612.1"/>
    <property type="molecule type" value="Genomic_DNA"/>
</dbReference>
<dbReference type="EMBL" id="AK000520">
    <property type="protein sequence ID" value="BAA91226.1"/>
    <property type="status" value="ALT_INIT"/>
    <property type="molecule type" value="mRNA"/>
</dbReference>
<dbReference type="EMBL" id="BC017796">
    <property type="protein sequence ID" value="AAH17796.1"/>
    <property type="molecule type" value="mRNA"/>
</dbReference>
<dbReference type="CCDS" id="CCDS3536.2"/>
<dbReference type="RefSeq" id="NP_060325.3">
    <property type="nucleotide sequence ID" value="NM_017855.3"/>
</dbReference>
<dbReference type="BioGRID" id="120297">
    <property type="interactions" value="15"/>
</dbReference>
<dbReference type="FunCoup" id="A1E959">
    <property type="interactions" value="9"/>
</dbReference>
<dbReference type="IntAct" id="A1E959">
    <property type="interactions" value="13"/>
</dbReference>
<dbReference type="MINT" id="A1E959"/>
<dbReference type="STRING" id="9606.ENSP00000379401"/>
<dbReference type="GlyCosmos" id="A1E959">
    <property type="glycosylation" value="12 sites, No reported glycans"/>
</dbReference>
<dbReference type="GlyGen" id="A1E959">
    <property type="glycosylation" value="13 sites, 1 O-linked glycan (1 site)"/>
</dbReference>
<dbReference type="iPTMnet" id="A1E959"/>
<dbReference type="PhosphoSitePlus" id="A1E959"/>
<dbReference type="BioMuta" id="ODAM"/>
<dbReference type="MassIVE" id="A1E959"/>
<dbReference type="PaxDb" id="9606-ENSP00000379401"/>
<dbReference type="PeptideAtlas" id="A1E959"/>
<dbReference type="Antibodypedia" id="24311">
    <property type="antibodies" value="31 antibodies from 14 providers"/>
</dbReference>
<dbReference type="DNASU" id="54959"/>
<dbReference type="Ensembl" id="ENST00000396094.6">
    <property type="protein sequence ID" value="ENSP00000379401.2"/>
    <property type="gene ID" value="ENSG00000109205.17"/>
</dbReference>
<dbReference type="Ensembl" id="ENST00000683306.1">
    <property type="protein sequence ID" value="ENSP00000507531.1"/>
    <property type="gene ID" value="ENSG00000109205.17"/>
</dbReference>
<dbReference type="GeneID" id="54959"/>
<dbReference type="KEGG" id="hsa:54959"/>
<dbReference type="MANE-Select" id="ENST00000683306.1">
    <property type="protein sequence ID" value="ENSP00000507531.1"/>
    <property type="RefSeq nucleotide sequence ID" value="NM_017855.4"/>
    <property type="RefSeq protein sequence ID" value="NP_060325.3"/>
</dbReference>
<dbReference type="UCSC" id="uc003hfc.4">
    <property type="organism name" value="human"/>
</dbReference>
<dbReference type="AGR" id="HGNC:26043"/>
<dbReference type="CTD" id="54959"/>
<dbReference type="DisGeNET" id="54959"/>
<dbReference type="GeneCards" id="ODAM"/>
<dbReference type="HGNC" id="HGNC:26043">
    <property type="gene designation" value="ODAM"/>
</dbReference>
<dbReference type="HPA" id="ENSG00000109205">
    <property type="expression patterns" value="Tissue enriched (salivary)"/>
</dbReference>
<dbReference type="MalaCards" id="ODAM"/>
<dbReference type="MIM" id="614843">
    <property type="type" value="gene"/>
</dbReference>
<dbReference type="neXtProt" id="NX_A1E959"/>
<dbReference type="OpenTargets" id="ENSG00000109205"/>
<dbReference type="PharmGKB" id="PA145148342"/>
<dbReference type="VEuPathDB" id="HostDB:ENSG00000109205"/>
<dbReference type="eggNOG" id="ENOG502RM1P">
    <property type="taxonomic scope" value="Eukaryota"/>
</dbReference>
<dbReference type="GeneTree" id="ENSGT00390000011100"/>
<dbReference type="HOGENOM" id="CLU_096142_0_0_1"/>
<dbReference type="InParanoid" id="A1E959"/>
<dbReference type="OMA" id="PNHVMPY"/>
<dbReference type="OrthoDB" id="9889202at2759"/>
<dbReference type="PAN-GO" id="A1E959">
    <property type="GO annotations" value="3 GO annotations based on evolutionary models"/>
</dbReference>
<dbReference type="PhylomeDB" id="A1E959"/>
<dbReference type="TreeFam" id="TF338424"/>
<dbReference type="PathwayCommons" id="A1E959"/>
<dbReference type="Reactome" id="R-HSA-977225">
    <property type="pathway name" value="Amyloid fiber formation"/>
</dbReference>
<dbReference type="SignaLink" id="A1E959"/>
<dbReference type="BioGRID-ORCS" id="54959">
    <property type="hits" value="10 hits in 1135 CRISPR screens"/>
</dbReference>
<dbReference type="ChiTaRS" id="ODAM">
    <property type="organism name" value="human"/>
</dbReference>
<dbReference type="GeneWiki" id="ODAM_(gene)"/>
<dbReference type="GenomeRNAi" id="54959"/>
<dbReference type="Pharos" id="A1E959">
    <property type="development level" value="Tbio"/>
</dbReference>
<dbReference type="PRO" id="PR:A1E959"/>
<dbReference type="Proteomes" id="UP000005640">
    <property type="component" value="Chromosome 4"/>
</dbReference>
<dbReference type="RNAct" id="A1E959">
    <property type="molecule type" value="protein"/>
</dbReference>
<dbReference type="Bgee" id="ENSG00000109205">
    <property type="expression patterns" value="Expressed in periodontal ligament and 119 other cell types or tissues"/>
</dbReference>
<dbReference type="ExpressionAtlas" id="A1E959">
    <property type="expression patterns" value="baseline and differential"/>
</dbReference>
<dbReference type="GO" id="GO:0071944">
    <property type="term" value="C:cell periphery"/>
    <property type="evidence" value="ECO:0000314"/>
    <property type="project" value="UniProtKB"/>
</dbReference>
<dbReference type="GO" id="GO:0005737">
    <property type="term" value="C:cytoplasm"/>
    <property type="evidence" value="ECO:0000314"/>
    <property type="project" value="UniProtKB"/>
</dbReference>
<dbReference type="GO" id="GO:0005829">
    <property type="term" value="C:cytosol"/>
    <property type="evidence" value="ECO:0000314"/>
    <property type="project" value="HPA"/>
</dbReference>
<dbReference type="GO" id="GO:0005576">
    <property type="term" value="C:extracellular region"/>
    <property type="evidence" value="ECO:0000304"/>
    <property type="project" value="Reactome"/>
</dbReference>
<dbReference type="GO" id="GO:0005615">
    <property type="term" value="C:extracellular space"/>
    <property type="evidence" value="ECO:0000314"/>
    <property type="project" value="UniProtKB"/>
</dbReference>
<dbReference type="GO" id="GO:0072686">
    <property type="term" value="C:mitotic spindle"/>
    <property type="evidence" value="ECO:0000314"/>
    <property type="project" value="HPA"/>
</dbReference>
<dbReference type="GO" id="GO:0005654">
    <property type="term" value="C:nucleoplasm"/>
    <property type="evidence" value="ECO:0000314"/>
    <property type="project" value="HPA"/>
</dbReference>
<dbReference type="GO" id="GO:0005634">
    <property type="term" value="C:nucleus"/>
    <property type="evidence" value="ECO:0000314"/>
    <property type="project" value="UniProtKB"/>
</dbReference>
<dbReference type="GO" id="GO:0099512">
    <property type="term" value="C:supramolecular fiber"/>
    <property type="evidence" value="ECO:0000314"/>
    <property type="project" value="UniProtKB"/>
</dbReference>
<dbReference type="GO" id="GO:0031214">
    <property type="term" value="P:biomineral tissue development"/>
    <property type="evidence" value="ECO:0007669"/>
    <property type="project" value="UniProtKB-KW"/>
</dbReference>
<dbReference type="GO" id="GO:0006954">
    <property type="term" value="P:inflammatory response"/>
    <property type="evidence" value="ECO:0000314"/>
    <property type="project" value="UniProtKB"/>
</dbReference>
<dbReference type="GO" id="GO:0042475">
    <property type="term" value="P:odontogenesis of dentin-containing tooth"/>
    <property type="evidence" value="ECO:0000270"/>
    <property type="project" value="HGNC-UCL"/>
</dbReference>
<dbReference type="GO" id="GO:0060054">
    <property type="term" value="P:positive regulation of epithelial cell proliferation involved in wound healing"/>
    <property type="evidence" value="ECO:0000270"/>
    <property type="project" value="UniProtKB"/>
</dbReference>
<dbReference type="GO" id="GO:0010628">
    <property type="term" value="P:positive regulation of gene expression"/>
    <property type="evidence" value="ECO:0000315"/>
    <property type="project" value="UniProtKB"/>
</dbReference>
<dbReference type="GO" id="GO:0043547">
    <property type="term" value="P:positive regulation of GTPase activity"/>
    <property type="evidence" value="ECO:0000315"/>
    <property type="project" value="UniProtKB"/>
</dbReference>
<dbReference type="GO" id="GO:0001934">
    <property type="term" value="P:positive regulation of protein phosphorylation"/>
    <property type="evidence" value="ECO:0000315"/>
    <property type="project" value="UniProtKB"/>
</dbReference>
<dbReference type="GO" id="GO:0032956">
    <property type="term" value="P:regulation of actin cytoskeleton organization"/>
    <property type="evidence" value="ECO:0000314"/>
    <property type="project" value="UniProtKB"/>
</dbReference>
<dbReference type="InterPro" id="IPR026802">
    <property type="entry name" value="Odam"/>
</dbReference>
<dbReference type="PANTHER" id="PTHR16237">
    <property type="entry name" value="ODONTOGENIC AMELOBLAST-ASSOCIATED PROTEIN"/>
    <property type="match status" value="1"/>
</dbReference>
<dbReference type="PANTHER" id="PTHR16237:SF3">
    <property type="entry name" value="ODONTOGENIC AMELOBLAST-ASSOCIATED PROTEIN"/>
    <property type="match status" value="1"/>
</dbReference>
<dbReference type="Pfam" id="PF15424">
    <property type="entry name" value="ODAM"/>
    <property type="match status" value="1"/>
</dbReference>
<name>ODAM_HUMAN</name>